<feature type="chain" id="PRO_1000073630" description="Pyridoxal 5'-phosphate synthase subunit PdxT">
    <location>
        <begin position="1"/>
        <end position="198"/>
    </location>
</feature>
<feature type="active site" description="Nucleophile" evidence="1">
    <location>
        <position position="82"/>
    </location>
</feature>
<feature type="active site" description="Charge relay system" evidence="1">
    <location>
        <position position="179"/>
    </location>
</feature>
<feature type="active site" description="Charge relay system" evidence="1">
    <location>
        <position position="181"/>
    </location>
</feature>
<feature type="binding site" evidence="1">
    <location>
        <begin position="50"/>
        <end position="52"/>
    </location>
    <ligand>
        <name>L-glutamine</name>
        <dbReference type="ChEBI" id="CHEBI:58359"/>
    </ligand>
</feature>
<feature type="binding site" evidence="1">
    <location>
        <position position="114"/>
    </location>
    <ligand>
        <name>L-glutamine</name>
        <dbReference type="ChEBI" id="CHEBI:58359"/>
    </ligand>
</feature>
<feature type="binding site" evidence="1">
    <location>
        <begin position="143"/>
        <end position="144"/>
    </location>
    <ligand>
        <name>L-glutamine</name>
        <dbReference type="ChEBI" id="CHEBI:58359"/>
    </ligand>
</feature>
<gene>
    <name evidence="1" type="primary">pdxT</name>
    <name type="ordered locus">Msed_1924</name>
</gene>
<protein>
    <recommendedName>
        <fullName evidence="1">Pyridoxal 5'-phosphate synthase subunit PdxT</fullName>
        <ecNumber evidence="1">4.3.3.6</ecNumber>
    </recommendedName>
    <alternativeName>
        <fullName evidence="1">Pdx2</fullName>
    </alternativeName>
    <alternativeName>
        <fullName evidence="1">Pyridoxal 5'-phosphate synthase glutaminase subunit</fullName>
        <ecNumber evidence="1">3.5.1.2</ecNumber>
    </alternativeName>
</protein>
<sequence>MKIGVVAYQGSFEEHALSVKRVFDKIGKGEVIPVKRAKDLDVDGIIIPGGESTTIGQVALRLGLLDPLKEKISQGIPVLGTCAGAIMLSKEVTDAKVGKKSQPLIGVMDASVIRNYYGRQRESFEATVDLEEIEGGKERFVFIRAPAISKVWGKARALATLNDVIVMAQEDQILTTTFHPELSGTTSIHEYFLRMVKR</sequence>
<accession>A4YI12</accession>
<name>PDXT_METS5</name>
<organism>
    <name type="scientific">Metallosphaera sedula (strain ATCC 51363 / DSM 5348 / JCM 9185 / NBRC 15509 / TH2)</name>
    <dbReference type="NCBI Taxonomy" id="399549"/>
    <lineage>
        <taxon>Archaea</taxon>
        <taxon>Thermoproteota</taxon>
        <taxon>Thermoprotei</taxon>
        <taxon>Sulfolobales</taxon>
        <taxon>Sulfolobaceae</taxon>
        <taxon>Metallosphaera</taxon>
    </lineage>
</organism>
<comment type="function">
    <text evidence="1">Catalyzes the hydrolysis of glutamine to glutamate and ammonia as part of the biosynthesis of pyridoxal 5'-phosphate. The resulting ammonia molecule is channeled to the active site of PdxS.</text>
</comment>
<comment type="catalytic activity">
    <reaction evidence="1">
        <text>aldehydo-D-ribose 5-phosphate + D-glyceraldehyde 3-phosphate + L-glutamine = pyridoxal 5'-phosphate + L-glutamate + phosphate + 3 H2O + H(+)</text>
        <dbReference type="Rhea" id="RHEA:31507"/>
        <dbReference type="ChEBI" id="CHEBI:15377"/>
        <dbReference type="ChEBI" id="CHEBI:15378"/>
        <dbReference type="ChEBI" id="CHEBI:29985"/>
        <dbReference type="ChEBI" id="CHEBI:43474"/>
        <dbReference type="ChEBI" id="CHEBI:58273"/>
        <dbReference type="ChEBI" id="CHEBI:58359"/>
        <dbReference type="ChEBI" id="CHEBI:59776"/>
        <dbReference type="ChEBI" id="CHEBI:597326"/>
        <dbReference type="EC" id="4.3.3.6"/>
    </reaction>
</comment>
<comment type="catalytic activity">
    <reaction evidence="1">
        <text>L-glutamine + H2O = L-glutamate + NH4(+)</text>
        <dbReference type="Rhea" id="RHEA:15889"/>
        <dbReference type="ChEBI" id="CHEBI:15377"/>
        <dbReference type="ChEBI" id="CHEBI:28938"/>
        <dbReference type="ChEBI" id="CHEBI:29985"/>
        <dbReference type="ChEBI" id="CHEBI:58359"/>
        <dbReference type="EC" id="3.5.1.2"/>
    </reaction>
</comment>
<comment type="pathway">
    <text evidence="1">Cofactor biosynthesis; pyridoxal 5'-phosphate biosynthesis.</text>
</comment>
<comment type="subunit">
    <text evidence="1">In the presence of PdxS, forms a dodecamer of heterodimers. Only shows activity in the heterodimer.</text>
</comment>
<comment type="similarity">
    <text evidence="1">Belongs to the glutaminase PdxT/SNO family.</text>
</comment>
<proteinExistence type="inferred from homology"/>
<evidence type="ECO:0000255" key="1">
    <source>
        <dbReference type="HAMAP-Rule" id="MF_01615"/>
    </source>
</evidence>
<dbReference type="EC" id="4.3.3.6" evidence="1"/>
<dbReference type="EC" id="3.5.1.2" evidence="1"/>
<dbReference type="EMBL" id="CP000682">
    <property type="protein sequence ID" value="ABP96064.1"/>
    <property type="molecule type" value="Genomic_DNA"/>
</dbReference>
<dbReference type="RefSeq" id="WP_012021851.1">
    <property type="nucleotide sequence ID" value="NZ_CP139956.1"/>
</dbReference>
<dbReference type="SMR" id="A4YI12"/>
<dbReference type="STRING" id="399549.Msed_1924"/>
<dbReference type="MEROPS" id="C26.A32"/>
<dbReference type="GeneID" id="97612969"/>
<dbReference type="KEGG" id="mse:Msed_1924"/>
<dbReference type="eggNOG" id="arCOG00034">
    <property type="taxonomic scope" value="Archaea"/>
</dbReference>
<dbReference type="HOGENOM" id="CLU_069674_2_0_2"/>
<dbReference type="UniPathway" id="UPA00245"/>
<dbReference type="Proteomes" id="UP000000242">
    <property type="component" value="Chromosome"/>
</dbReference>
<dbReference type="GO" id="GO:0005829">
    <property type="term" value="C:cytosol"/>
    <property type="evidence" value="ECO:0007669"/>
    <property type="project" value="TreeGrafter"/>
</dbReference>
<dbReference type="GO" id="GO:1903600">
    <property type="term" value="C:glutaminase complex"/>
    <property type="evidence" value="ECO:0007669"/>
    <property type="project" value="TreeGrafter"/>
</dbReference>
<dbReference type="GO" id="GO:0004359">
    <property type="term" value="F:glutaminase activity"/>
    <property type="evidence" value="ECO:0007669"/>
    <property type="project" value="UniProtKB-UniRule"/>
</dbReference>
<dbReference type="GO" id="GO:0036381">
    <property type="term" value="F:pyridoxal 5'-phosphate synthase (glutamine hydrolysing) activity"/>
    <property type="evidence" value="ECO:0007669"/>
    <property type="project" value="UniProtKB-UniRule"/>
</dbReference>
<dbReference type="GO" id="GO:0006543">
    <property type="term" value="P:glutamine catabolic process"/>
    <property type="evidence" value="ECO:0007669"/>
    <property type="project" value="UniProtKB-UniRule"/>
</dbReference>
<dbReference type="GO" id="GO:0042823">
    <property type="term" value="P:pyridoxal phosphate biosynthetic process"/>
    <property type="evidence" value="ECO:0007669"/>
    <property type="project" value="UniProtKB-UniRule"/>
</dbReference>
<dbReference type="GO" id="GO:0008614">
    <property type="term" value="P:pyridoxine metabolic process"/>
    <property type="evidence" value="ECO:0007669"/>
    <property type="project" value="TreeGrafter"/>
</dbReference>
<dbReference type="CDD" id="cd01749">
    <property type="entry name" value="GATase1_PB"/>
    <property type="match status" value="1"/>
</dbReference>
<dbReference type="FunFam" id="3.40.50.880:FF:000041">
    <property type="entry name" value="Glutamine amidotransferase subunit pdxT, putative"/>
    <property type="match status" value="1"/>
</dbReference>
<dbReference type="Gene3D" id="3.40.50.880">
    <property type="match status" value="1"/>
</dbReference>
<dbReference type="HAMAP" id="MF_01615">
    <property type="entry name" value="PdxT"/>
    <property type="match status" value="1"/>
</dbReference>
<dbReference type="InterPro" id="IPR029062">
    <property type="entry name" value="Class_I_gatase-like"/>
</dbReference>
<dbReference type="InterPro" id="IPR002161">
    <property type="entry name" value="PdxT/SNO"/>
</dbReference>
<dbReference type="InterPro" id="IPR021196">
    <property type="entry name" value="PdxT/SNO_CS"/>
</dbReference>
<dbReference type="NCBIfam" id="TIGR03800">
    <property type="entry name" value="PLP_synth_Pdx2"/>
    <property type="match status" value="1"/>
</dbReference>
<dbReference type="PANTHER" id="PTHR31559">
    <property type="entry name" value="PYRIDOXAL 5'-PHOSPHATE SYNTHASE SUBUNIT SNO"/>
    <property type="match status" value="1"/>
</dbReference>
<dbReference type="PANTHER" id="PTHR31559:SF0">
    <property type="entry name" value="PYRIDOXAL 5'-PHOSPHATE SYNTHASE SUBUNIT SNO1-RELATED"/>
    <property type="match status" value="1"/>
</dbReference>
<dbReference type="Pfam" id="PF01174">
    <property type="entry name" value="SNO"/>
    <property type="match status" value="1"/>
</dbReference>
<dbReference type="PIRSF" id="PIRSF005639">
    <property type="entry name" value="Glut_amidoT_SNO"/>
    <property type="match status" value="1"/>
</dbReference>
<dbReference type="SUPFAM" id="SSF52317">
    <property type="entry name" value="Class I glutamine amidotransferase-like"/>
    <property type="match status" value="1"/>
</dbReference>
<dbReference type="PROSITE" id="PS01236">
    <property type="entry name" value="PDXT_SNO_1"/>
    <property type="match status" value="1"/>
</dbReference>
<dbReference type="PROSITE" id="PS51130">
    <property type="entry name" value="PDXT_SNO_2"/>
    <property type="match status" value="1"/>
</dbReference>
<reference key="1">
    <citation type="journal article" date="2008" name="Appl. Environ. Microbiol.">
        <title>The genome sequence of the metal-mobilizing, extremely thermoacidophilic archaeon Metallosphaera sedula provides insights into bioleaching-associated metabolism.</title>
        <authorList>
            <person name="Auernik K.S."/>
            <person name="Maezato Y."/>
            <person name="Blum P.H."/>
            <person name="Kelly R.M."/>
        </authorList>
    </citation>
    <scope>NUCLEOTIDE SEQUENCE [LARGE SCALE GENOMIC DNA]</scope>
    <source>
        <strain>ATCC 51363 / DSM 5348 / JCM 9185 / NBRC 15509 / TH2</strain>
    </source>
</reference>
<keyword id="KW-0315">Glutamine amidotransferase</keyword>
<keyword id="KW-0378">Hydrolase</keyword>
<keyword id="KW-0456">Lyase</keyword>
<keyword id="KW-0663">Pyridoxal phosphate</keyword>
<keyword id="KW-1185">Reference proteome</keyword>